<sequence length="141" mass="15033">VLSASDKANVKAVFGKIGGQAEEFGAETLERMFATYPQTKTYFPHFDLGKGSAQVKGHGKKVAAALVEAANHVDDIAGALSKLSDLHAQKLRVDPVNFKLLGQCFLVVVASHNPALLTPEVHASLDKFLCAVGTVLTAKYR</sequence>
<evidence type="ECO:0000255" key="1">
    <source>
        <dbReference type="PROSITE-ProRule" id="PRU00238"/>
    </source>
</evidence>
<accession>P01997</accession>
<gene>
    <name type="primary">HBAA</name>
</gene>
<feature type="chain" id="PRO_0000052771" description="Hemoglobin subunit alpha-A">
    <location>
        <begin position="1"/>
        <end position="141"/>
    </location>
</feature>
<feature type="domain" description="Globin" evidence="1">
    <location>
        <begin position="1"/>
        <end position="141"/>
    </location>
</feature>
<feature type="binding site" evidence="1">
    <location>
        <position position="58"/>
    </location>
    <ligand>
        <name>O2</name>
        <dbReference type="ChEBI" id="CHEBI:15379"/>
    </ligand>
</feature>
<feature type="binding site" description="proximal binding residue" evidence="1">
    <location>
        <position position="87"/>
    </location>
    <ligand>
        <name>heme b</name>
        <dbReference type="ChEBI" id="CHEBI:60344"/>
    </ligand>
    <ligandPart>
        <name>Fe</name>
        <dbReference type="ChEBI" id="CHEBI:18248"/>
    </ligandPart>
</feature>
<organism>
    <name type="scientific">Sturnus vulgaris</name>
    <name type="common">Starling</name>
    <dbReference type="NCBI Taxonomy" id="9172"/>
    <lineage>
        <taxon>Eukaryota</taxon>
        <taxon>Metazoa</taxon>
        <taxon>Chordata</taxon>
        <taxon>Craniata</taxon>
        <taxon>Vertebrata</taxon>
        <taxon>Euteleostomi</taxon>
        <taxon>Archelosauria</taxon>
        <taxon>Archosauria</taxon>
        <taxon>Dinosauria</taxon>
        <taxon>Saurischia</taxon>
        <taxon>Theropoda</taxon>
        <taxon>Coelurosauria</taxon>
        <taxon>Aves</taxon>
        <taxon>Neognathae</taxon>
        <taxon>Neoaves</taxon>
        <taxon>Telluraves</taxon>
        <taxon>Australaves</taxon>
        <taxon>Passeriformes</taxon>
        <taxon>Sturnidae</taxon>
        <taxon>Sturnus</taxon>
    </lineage>
</organism>
<dbReference type="PIR" id="A02318">
    <property type="entry name" value="HAJSA"/>
</dbReference>
<dbReference type="SMR" id="P01997"/>
<dbReference type="GO" id="GO:0072562">
    <property type="term" value="C:blood microparticle"/>
    <property type="evidence" value="ECO:0007669"/>
    <property type="project" value="TreeGrafter"/>
</dbReference>
<dbReference type="GO" id="GO:0031838">
    <property type="term" value="C:haptoglobin-hemoglobin complex"/>
    <property type="evidence" value="ECO:0007669"/>
    <property type="project" value="TreeGrafter"/>
</dbReference>
<dbReference type="GO" id="GO:0005833">
    <property type="term" value="C:hemoglobin complex"/>
    <property type="evidence" value="ECO:0007669"/>
    <property type="project" value="InterPro"/>
</dbReference>
<dbReference type="GO" id="GO:0031720">
    <property type="term" value="F:haptoglobin binding"/>
    <property type="evidence" value="ECO:0007669"/>
    <property type="project" value="TreeGrafter"/>
</dbReference>
<dbReference type="GO" id="GO:0020037">
    <property type="term" value="F:heme binding"/>
    <property type="evidence" value="ECO:0007669"/>
    <property type="project" value="InterPro"/>
</dbReference>
<dbReference type="GO" id="GO:0005506">
    <property type="term" value="F:iron ion binding"/>
    <property type="evidence" value="ECO:0007669"/>
    <property type="project" value="InterPro"/>
</dbReference>
<dbReference type="GO" id="GO:0043177">
    <property type="term" value="F:organic acid binding"/>
    <property type="evidence" value="ECO:0007669"/>
    <property type="project" value="TreeGrafter"/>
</dbReference>
<dbReference type="GO" id="GO:0019825">
    <property type="term" value="F:oxygen binding"/>
    <property type="evidence" value="ECO:0007669"/>
    <property type="project" value="InterPro"/>
</dbReference>
<dbReference type="GO" id="GO:0005344">
    <property type="term" value="F:oxygen carrier activity"/>
    <property type="evidence" value="ECO:0007669"/>
    <property type="project" value="UniProtKB-KW"/>
</dbReference>
<dbReference type="GO" id="GO:0004601">
    <property type="term" value="F:peroxidase activity"/>
    <property type="evidence" value="ECO:0007669"/>
    <property type="project" value="TreeGrafter"/>
</dbReference>
<dbReference type="GO" id="GO:0042744">
    <property type="term" value="P:hydrogen peroxide catabolic process"/>
    <property type="evidence" value="ECO:0007669"/>
    <property type="project" value="TreeGrafter"/>
</dbReference>
<dbReference type="CDD" id="cd08927">
    <property type="entry name" value="Hb-alpha-like"/>
    <property type="match status" value="1"/>
</dbReference>
<dbReference type="FunFam" id="1.10.490.10:FF:000002">
    <property type="entry name" value="Hemoglobin subunit alpha"/>
    <property type="match status" value="1"/>
</dbReference>
<dbReference type="Gene3D" id="1.10.490.10">
    <property type="entry name" value="Globins"/>
    <property type="match status" value="1"/>
</dbReference>
<dbReference type="InterPro" id="IPR000971">
    <property type="entry name" value="Globin"/>
</dbReference>
<dbReference type="InterPro" id="IPR009050">
    <property type="entry name" value="Globin-like_sf"/>
</dbReference>
<dbReference type="InterPro" id="IPR012292">
    <property type="entry name" value="Globin/Proto"/>
</dbReference>
<dbReference type="InterPro" id="IPR002338">
    <property type="entry name" value="Hemoglobin_a-typ"/>
</dbReference>
<dbReference type="InterPro" id="IPR050056">
    <property type="entry name" value="Hemoglobin_oxygen_transport"/>
</dbReference>
<dbReference type="InterPro" id="IPR002339">
    <property type="entry name" value="Hemoglobin_pi"/>
</dbReference>
<dbReference type="PANTHER" id="PTHR11442">
    <property type="entry name" value="HEMOGLOBIN FAMILY MEMBER"/>
    <property type="match status" value="1"/>
</dbReference>
<dbReference type="PANTHER" id="PTHR11442:SF48">
    <property type="entry name" value="HEMOGLOBIN SUBUNIT ALPHA"/>
    <property type="match status" value="1"/>
</dbReference>
<dbReference type="Pfam" id="PF00042">
    <property type="entry name" value="Globin"/>
    <property type="match status" value="1"/>
</dbReference>
<dbReference type="PRINTS" id="PR00612">
    <property type="entry name" value="ALPHAHAEM"/>
</dbReference>
<dbReference type="PRINTS" id="PR00815">
    <property type="entry name" value="PIHAEM"/>
</dbReference>
<dbReference type="SUPFAM" id="SSF46458">
    <property type="entry name" value="Globin-like"/>
    <property type="match status" value="1"/>
</dbReference>
<dbReference type="PROSITE" id="PS01033">
    <property type="entry name" value="GLOBIN"/>
    <property type="match status" value="1"/>
</dbReference>
<comment type="function">
    <text>Involved in oxygen transport from the lung to the various peripheral tissues.</text>
</comment>
<comment type="subunit">
    <text>Heterotetramer of two alpha chains and two beta chains.</text>
</comment>
<comment type="tissue specificity">
    <text>Red blood cells.</text>
</comment>
<comment type="similarity">
    <text evidence="1">Belongs to the globin family.</text>
</comment>
<protein>
    <recommendedName>
        <fullName>Hemoglobin subunit alpha-A</fullName>
    </recommendedName>
    <alternativeName>
        <fullName>Alpha-A-globin</fullName>
    </alternativeName>
    <alternativeName>
        <fullName>Hemoglobin alpha-A chain</fullName>
    </alternativeName>
</protein>
<keyword id="KW-0903">Direct protein sequencing</keyword>
<keyword id="KW-0349">Heme</keyword>
<keyword id="KW-0408">Iron</keyword>
<keyword id="KW-0479">Metal-binding</keyword>
<keyword id="KW-0561">Oxygen transport</keyword>
<keyword id="KW-0813">Transport</keyword>
<reference key="1">
    <citation type="journal article" date="1984" name="Hoppe-Seyler's Z. Physiol. Chem.">
        <title>Hemoglobins of the common starling (Sturnus vulgaris, Passeriformes). The primary structures of the alphaA, alphaD and beta chains.</title>
        <authorList>
            <person name="Oberthur W."/>
            <person name="Braunitzer G."/>
        </authorList>
    </citation>
    <scope>PROTEIN SEQUENCE</scope>
</reference>
<proteinExistence type="evidence at protein level"/>
<name>HBA_STUVU</name>